<gene>
    <name evidence="1" type="primary">trpA</name>
    <name type="ordered locus">CC_3543</name>
</gene>
<proteinExistence type="inferred from homology"/>
<name>TRPA_CAUVC</name>
<protein>
    <recommendedName>
        <fullName evidence="1">Tryptophan synthase alpha chain</fullName>
        <ecNumber evidence="1">4.2.1.20</ecNumber>
    </recommendedName>
</protein>
<sequence length="275" mass="28520">MTKDRIDRRFAALKAENRAGFVTYVMAGDPDAATTLSVLKGLPAAGADLIELGFPFSDPMAEGPTIQRAAQRGLKSGMTLQGTLDLVAAFREGDQDTPIILMGYLNPVLNKGFETFAALAAKAGVDGLIIVDCPPEEADPLSDALEAEGIALIRLAAPTTDDARLPMVVRRTSGFVYYVSVAGVTGVKSADAADVAPAVERLRKASGLPVAVGFGIRTPDQAAAVAKVADAAVVGSALVDEIESAAQLNENVTEKVLLKASELAKAVRSARVGTK</sequence>
<accession>P12291</accession>
<feature type="chain" id="PRO_0000098765" description="Tryptophan synthase alpha chain">
    <location>
        <begin position="1"/>
        <end position="275"/>
    </location>
</feature>
<feature type="active site" description="Proton acceptor" evidence="1">
    <location>
        <position position="51"/>
    </location>
</feature>
<dbReference type="EC" id="4.2.1.20" evidence="1"/>
<dbReference type="EMBL" id="M19129">
    <property type="protein sequence ID" value="AAA23058.1"/>
    <property type="molecule type" value="Genomic_DNA"/>
</dbReference>
<dbReference type="EMBL" id="AE005673">
    <property type="protein sequence ID" value="AAK25505.1"/>
    <property type="molecule type" value="Genomic_DNA"/>
</dbReference>
<dbReference type="PIR" id="D43664">
    <property type="entry name" value="D43664"/>
</dbReference>
<dbReference type="RefSeq" id="NP_422337.1">
    <property type="nucleotide sequence ID" value="NC_002696.2"/>
</dbReference>
<dbReference type="RefSeq" id="WP_010921372.1">
    <property type="nucleotide sequence ID" value="NC_002696.2"/>
</dbReference>
<dbReference type="SMR" id="P12291"/>
<dbReference type="STRING" id="190650.CC_3543"/>
<dbReference type="EnsemblBacteria" id="AAK25505">
    <property type="protein sequence ID" value="AAK25505"/>
    <property type="gene ID" value="CC_3543"/>
</dbReference>
<dbReference type="KEGG" id="ccr:CC_3543"/>
<dbReference type="PATRIC" id="fig|190650.5.peg.3548"/>
<dbReference type="eggNOG" id="COG0159">
    <property type="taxonomic scope" value="Bacteria"/>
</dbReference>
<dbReference type="HOGENOM" id="CLU_016734_0_0_5"/>
<dbReference type="BioCyc" id="CAULO:CC3543-MONOMER"/>
<dbReference type="UniPathway" id="UPA00035">
    <property type="reaction ID" value="UER00044"/>
</dbReference>
<dbReference type="Proteomes" id="UP000001816">
    <property type="component" value="Chromosome"/>
</dbReference>
<dbReference type="GO" id="GO:0005829">
    <property type="term" value="C:cytosol"/>
    <property type="evidence" value="ECO:0007669"/>
    <property type="project" value="TreeGrafter"/>
</dbReference>
<dbReference type="GO" id="GO:0004834">
    <property type="term" value="F:tryptophan synthase activity"/>
    <property type="evidence" value="ECO:0007669"/>
    <property type="project" value="UniProtKB-UniRule"/>
</dbReference>
<dbReference type="CDD" id="cd04724">
    <property type="entry name" value="Tryptophan_synthase_alpha"/>
    <property type="match status" value="1"/>
</dbReference>
<dbReference type="FunFam" id="3.20.20.70:FF:000037">
    <property type="entry name" value="Tryptophan synthase alpha chain"/>
    <property type="match status" value="1"/>
</dbReference>
<dbReference type="Gene3D" id="3.20.20.70">
    <property type="entry name" value="Aldolase class I"/>
    <property type="match status" value="1"/>
</dbReference>
<dbReference type="HAMAP" id="MF_00131">
    <property type="entry name" value="Trp_synth_alpha"/>
    <property type="match status" value="1"/>
</dbReference>
<dbReference type="InterPro" id="IPR013785">
    <property type="entry name" value="Aldolase_TIM"/>
</dbReference>
<dbReference type="InterPro" id="IPR011060">
    <property type="entry name" value="RibuloseP-bd_barrel"/>
</dbReference>
<dbReference type="InterPro" id="IPR018204">
    <property type="entry name" value="Trp_synthase_alpha_AS"/>
</dbReference>
<dbReference type="InterPro" id="IPR002028">
    <property type="entry name" value="Trp_synthase_suA"/>
</dbReference>
<dbReference type="NCBIfam" id="TIGR00262">
    <property type="entry name" value="trpA"/>
    <property type="match status" value="1"/>
</dbReference>
<dbReference type="PANTHER" id="PTHR43406:SF1">
    <property type="entry name" value="TRYPTOPHAN SYNTHASE ALPHA CHAIN, CHLOROPLASTIC"/>
    <property type="match status" value="1"/>
</dbReference>
<dbReference type="PANTHER" id="PTHR43406">
    <property type="entry name" value="TRYPTOPHAN SYNTHASE, ALPHA CHAIN"/>
    <property type="match status" value="1"/>
</dbReference>
<dbReference type="Pfam" id="PF00290">
    <property type="entry name" value="Trp_syntA"/>
    <property type="match status" value="1"/>
</dbReference>
<dbReference type="SUPFAM" id="SSF51366">
    <property type="entry name" value="Ribulose-phoshate binding barrel"/>
    <property type="match status" value="1"/>
</dbReference>
<dbReference type="PROSITE" id="PS00167">
    <property type="entry name" value="TRP_SYNTHASE_ALPHA"/>
    <property type="match status" value="1"/>
</dbReference>
<evidence type="ECO:0000255" key="1">
    <source>
        <dbReference type="HAMAP-Rule" id="MF_00131"/>
    </source>
</evidence>
<organism>
    <name type="scientific">Caulobacter vibrioides (strain ATCC 19089 / CIP 103742 / CB 15)</name>
    <name type="common">Caulobacter crescentus</name>
    <dbReference type="NCBI Taxonomy" id="190650"/>
    <lineage>
        <taxon>Bacteria</taxon>
        <taxon>Pseudomonadati</taxon>
        <taxon>Pseudomonadota</taxon>
        <taxon>Alphaproteobacteria</taxon>
        <taxon>Caulobacterales</taxon>
        <taxon>Caulobacteraceae</taxon>
        <taxon>Caulobacter</taxon>
    </lineage>
</organism>
<reference key="1">
    <citation type="journal article" date="1988" name="J. Bacteriol.">
        <title>Structure of the Caulobacter crescentus trpFBA operon.</title>
        <authorList>
            <person name="Ross C.M."/>
            <person name="Winkler M.E."/>
        </authorList>
    </citation>
    <scope>NUCLEOTIDE SEQUENCE [GENOMIC DNA]</scope>
</reference>
<reference key="2">
    <citation type="journal article" date="2001" name="Proc. Natl. Acad. Sci. U.S.A.">
        <title>Complete genome sequence of Caulobacter crescentus.</title>
        <authorList>
            <person name="Nierman W.C."/>
            <person name="Feldblyum T.V."/>
            <person name="Laub M.T."/>
            <person name="Paulsen I.T."/>
            <person name="Nelson K.E."/>
            <person name="Eisen J.A."/>
            <person name="Heidelberg J.F."/>
            <person name="Alley M.R.K."/>
            <person name="Ohta N."/>
            <person name="Maddock J.R."/>
            <person name="Potocka I."/>
            <person name="Nelson W.C."/>
            <person name="Newton A."/>
            <person name="Stephens C."/>
            <person name="Phadke N.D."/>
            <person name="Ely B."/>
            <person name="DeBoy R.T."/>
            <person name="Dodson R.J."/>
            <person name="Durkin A.S."/>
            <person name="Gwinn M.L."/>
            <person name="Haft D.H."/>
            <person name="Kolonay J.F."/>
            <person name="Smit J."/>
            <person name="Craven M.B."/>
            <person name="Khouri H.M."/>
            <person name="Shetty J."/>
            <person name="Berry K.J."/>
            <person name="Utterback T.R."/>
            <person name="Tran K."/>
            <person name="Wolf A.M."/>
            <person name="Vamathevan J.J."/>
            <person name="Ermolaeva M.D."/>
            <person name="White O."/>
            <person name="Salzberg S.L."/>
            <person name="Venter J.C."/>
            <person name="Shapiro L."/>
            <person name="Fraser C.M."/>
        </authorList>
    </citation>
    <scope>NUCLEOTIDE SEQUENCE [LARGE SCALE GENOMIC DNA]</scope>
    <source>
        <strain>ATCC 19089 / CIP 103742 / CB 15</strain>
    </source>
</reference>
<comment type="function">
    <text evidence="1">The alpha subunit is responsible for the aldol cleavage of indoleglycerol phosphate to indole and glyceraldehyde 3-phosphate.</text>
</comment>
<comment type="catalytic activity">
    <reaction evidence="1">
        <text>(1S,2R)-1-C-(indol-3-yl)glycerol 3-phosphate + L-serine = D-glyceraldehyde 3-phosphate + L-tryptophan + H2O</text>
        <dbReference type="Rhea" id="RHEA:10532"/>
        <dbReference type="ChEBI" id="CHEBI:15377"/>
        <dbReference type="ChEBI" id="CHEBI:33384"/>
        <dbReference type="ChEBI" id="CHEBI:57912"/>
        <dbReference type="ChEBI" id="CHEBI:58866"/>
        <dbReference type="ChEBI" id="CHEBI:59776"/>
        <dbReference type="EC" id="4.2.1.20"/>
    </reaction>
</comment>
<comment type="pathway">
    <text evidence="1">Amino-acid biosynthesis; L-tryptophan biosynthesis; L-tryptophan from chorismate: step 5/5.</text>
</comment>
<comment type="subunit">
    <text evidence="1">Tetramer of two alpha and two beta chains.</text>
</comment>
<comment type="similarity">
    <text evidence="1">Belongs to the TrpA family.</text>
</comment>
<keyword id="KW-0028">Amino-acid biosynthesis</keyword>
<keyword id="KW-0057">Aromatic amino acid biosynthesis</keyword>
<keyword id="KW-0456">Lyase</keyword>
<keyword id="KW-1185">Reference proteome</keyword>
<keyword id="KW-0822">Tryptophan biosynthesis</keyword>